<sequence length="307" mass="34530">MKLTLNRILFSGLALSILFTLTGCVGRDAHGNPKGMIWEFLGKPMSYFIDYFANNAGLGYGLAIIIVTIIVRTLILPLGLYQSWKASYQSEKMTFLKPVFEPINKRIKQASSQEEKMAAQTELMAAQRAHGINPLGGIGCLPLLIQMPFFSAMYFAAQYTKGVSTSTFMGIDLGSRSLVLTAIIAALYFFQSWLSMMAVSEEQREQMKTMMYTMPIMMIFMSFSLPAGVGLYWLVGGFFSIIQQLITTYLLKPRLHKQIKEEYAKTPPKAYQSTSSRKDVTPSQNMEQANLPKKIKSNRNAGKQRKR</sequence>
<gene>
    <name evidence="1" type="primary">yidC2</name>
    <name type="ordered locus">spyM18_0404</name>
</gene>
<feature type="signal peptide" evidence="1">
    <location>
        <begin position="1"/>
        <end position="23"/>
    </location>
</feature>
<feature type="chain" id="PRO_0000020417" description="Membrane protein insertase YidC 2">
    <location>
        <begin position="24"/>
        <end position="307"/>
    </location>
</feature>
<feature type="transmembrane region" description="Helical" evidence="1">
    <location>
        <begin position="58"/>
        <end position="78"/>
    </location>
</feature>
<feature type="transmembrane region" description="Helical" evidence="1">
    <location>
        <begin position="135"/>
        <end position="155"/>
    </location>
</feature>
<feature type="transmembrane region" description="Helical" evidence="1">
    <location>
        <begin position="179"/>
        <end position="199"/>
    </location>
</feature>
<feature type="transmembrane region" description="Helical" evidence="1">
    <location>
        <begin position="209"/>
        <end position="225"/>
    </location>
</feature>
<feature type="transmembrane region" description="Helical" evidence="1">
    <location>
        <begin position="231"/>
        <end position="251"/>
    </location>
</feature>
<feature type="region of interest" description="Disordered" evidence="2">
    <location>
        <begin position="263"/>
        <end position="307"/>
    </location>
</feature>
<feature type="compositionally biased region" description="Polar residues" evidence="2">
    <location>
        <begin position="271"/>
        <end position="288"/>
    </location>
</feature>
<feature type="compositionally biased region" description="Basic residues" evidence="2">
    <location>
        <begin position="293"/>
        <end position="307"/>
    </location>
</feature>
<feature type="lipid moiety-binding region" description="N-palmitoyl cysteine" evidence="1">
    <location>
        <position position="24"/>
    </location>
</feature>
<feature type="lipid moiety-binding region" description="S-diacylglycerol cysteine" evidence="1">
    <location>
        <position position="24"/>
    </location>
</feature>
<proteinExistence type="inferred from homology"/>
<reference key="1">
    <citation type="journal article" date="2002" name="Proc. Natl. Acad. Sci. U.S.A.">
        <title>Genome sequence and comparative microarray analysis of serotype M18 group A Streptococcus strains associated with acute rheumatic fever outbreaks.</title>
        <authorList>
            <person name="Smoot J.C."/>
            <person name="Barbian K.D."/>
            <person name="Van Gompel J.J."/>
            <person name="Smoot L.M."/>
            <person name="Chaussee M.S."/>
            <person name="Sylva G.L."/>
            <person name="Sturdevant D.E."/>
            <person name="Ricklefs S.M."/>
            <person name="Porcella S.F."/>
            <person name="Parkins L.D."/>
            <person name="Beres S.B."/>
            <person name="Campbell D.S."/>
            <person name="Smith T.M."/>
            <person name="Zhang Q."/>
            <person name="Kapur V."/>
            <person name="Daly J.A."/>
            <person name="Veasy L.G."/>
            <person name="Musser J.M."/>
        </authorList>
    </citation>
    <scope>NUCLEOTIDE SEQUENCE [LARGE SCALE GENOMIC DNA]</scope>
    <source>
        <strain>MGAS8232</strain>
    </source>
</reference>
<protein>
    <recommendedName>
        <fullName evidence="1">Membrane protein insertase YidC 2</fullName>
    </recommendedName>
    <alternativeName>
        <fullName evidence="1">Foldase YidC 2</fullName>
    </alternativeName>
    <alternativeName>
        <fullName evidence="1">Membrane integrase YidC 2</fullName>
    </alternativeName>
    <alternativeName>
        <fullName evidence="1">Membrane protein YidC 2</fullName>
    </alternativeName>
</protein>
<evidence type="ECO:0000255" key="1">
    <source>
        <dbReference type="HAMAP-Rule" id="MF_01811"/>
    </source>
</evidence>
<evidence type="ECO:0000256" key="2">
    <source>
        <dbReference type="SAM" id="MobiDB-lite"/>
    </source>
</evidence>
<accession>Q8P2D8</accession>
<name>YIDC2_STRP8</name>
<keyword id="KW-1003">Cell membrane</keyword>
<keyword id="KW-0143">Chaperone</keyword>
<keyword id="KW-0449">Lipoprotein</keyword>
<keyword id="KW-0472">Membrane</keyword>
<keyword id="KW-0564">Palmitate</keyword>
<keyword id="KW-0653">Protein transport</keyword>
<keyword id="KW-0732">Signal</keyword>
<keyword id="KW-0812">Transmembrane</keyword>
<keyword id="KW-1133">Transmembrane helix</keyword>
<keyword id="KW-0813">Transport</keyword>
<dbReference type="EMBL" id="AE009949">
    <property type="protein sequence ID" value="AAL97148.1"/>
    <property type="molecule type" value="Genomic_DNA"/>
</dbReference>
<dbReference type="SMR" id="Q8P2D8"/>
<dbReference type="KEGG" id="spm:spyM18_0404"/>
<dbReference type="HOGENOM" id="CLU_036138_5_1_9"/>
<dbReference type="GO" id="GO:0005886">
    <property type="term" value="C:plasma membrane"/>
    <property type="evidence" value="ECO:0007669"/>
    <property type="project" value="UniProtKB-SubCell"/>
</dbReference>
<dbReference type="GO" id="GO:0032977">
    <property type="term" value="F:membrane insertase activity"/>
    <property type="evidence" value="ECO:0007669"/>
    <property type="project" value="InterPro"/>
</dbReference>
<dbReference type="GO" id="GO:0051205">
    <property type="term" value="P:protein insertion into membrane"/>
    <property type="evidence" value="ECO:0007669"/>
    <property type="project" value="TreeGrafter"/>
</dbReference>
<dbReference type="GO" id="GO:0015031">
    <property type="term" value="P:protein transport"/>
    <property type="evidence" value="ECO:0007669"/>
    <property type="project" value="UniProtKB-KW"/>
</dbReference>
<dbReference type="CDD" id="cd20070">
    <property type="entry name" value="5TM_YidC_Alb3"/>
    <property type="match status" value="1"/>
</dbReference>
<dbReference type="HAMAP" id="MF_01811">
    <property type="entry name" value="YidC_type2"/>
    <property type="match status" value="1"/>
</dbReference>
<dbReference type="InterPro" id="IPR001708">
    <property type="entry name" value="YidC/ALB3/OXA1/COX18"/>
</dbReference>
<dbReference type="InterPro" id="IPR028055">
    <property type="entry name" value="YidC/Oxa/ALB_C"/>
</dbReference>
<dbReference type="InterPro" id="IPR023060">
    <property type="entry name" value="YidC/YidC1/YidC2_Firmicutes"/>
</dbReference>
<dbReference type="InterPro" id="IPR047196">
    <property type="entry name" value="YidC_ALB_C"/>
</dbReference>
<dbReference type="NCBIfam" id="NF002687">
    <property type="entry name" value="PRK02463.1"/>
    <property type="match status" value="1"/>
</dbReference>
<dbReference type="NCBIfam" id="TIGR03592">
    <property type="entry name" value="yidC_oxa1_cterm"/>
    <property type="match status" value="1"/>
</dbReference>
<dbReference type="PANTHER" id="PTHR12428:SF65">
    <property type="entry name" value="CYTOCHROME C OXIDASE ASSEMBLY PROTEIN COX18, MITOCHONDRIAL"/>
    <property type="match status" value="1"/>
</dbReference>
<dbReference type="PANTHER" id="PTHR12428">
    <property type="entry name" value="OXA1"/>
    <property type="match status" value="1"/>
</dbReference>
<dbReference type="Pfam" id="PF02096">
    <property type="entry name" value="60KD_IMP"/>
    <property type="match status" value="1"/>
</dbReference>
<dbReference type="PROSITE" id="PS51257">
    <property type="entry name" value="PROKAR_LIPOPROTEIN"/>
    <property type="match status" value="1"/>
</dbReference>
<comment type="function">
    <text evidence="1">Required for the insertion and/or proper folding and/or complex formation of integral membrane proteins into the membrane. Involved in integration of membrane proteins that insert both dependently and independently of the Sec translocase complex, as well as at least some lipoproteins.</text>
</comment>
<comment type="subcellular location">
    <subcellularLocation>
        <location evidence="1">Cell membrane</location>
        <topology evidence="1">Multi-pass membrane protein</topology>
    </subcellularLocation>
</comment>
<comment type="similarity">
    <text evidence="1">Belongs to the OXA1/ALB3/YidC family. Type 2 subfamily.</text>
</comment>
<organism>
    <name type="scientific">Streptococcus pyogenes serotype M18 (strain MGAS8232)</name>
    <dbReference type="NCBI Taxonomy" id="186103"/>
    <lineage>
        <taxon>Bacteria</taxon>
        <taxon>Bacillati</taxon>
        <taxon>Bacillota</taxon>
        <taxon>Bacilli</taxon>
        <taxon>Lactobacillales</taxon>
        <taxon>Streptococcaceae</taxon>
        <taxon>Streptococcus</taxon>
    </lineage>
</organism>